<comment type="function">
    <text evidence="7 10">Serine protease (PubMed:11893850, PubMed:16436150). Hydrolyzes casein, gelatin and human collagen type IV, but not elastin in vitro (PubMed:16436150). Hydrolyzes OCLN of the human lung epithelial cells at 202-Gln-|-Ser-203 and Gln-211-|-Ile-212 (PubMed:16436150).</text>
</comment>
<comment type="activity regulation">
    <text evidence="7">Inhibited by phenylmethanesulfonyl fluoride (PMSF) and diethyl pyrocarbonate (DEPC), but not by benzamidine.</text>
</comment>
<comment type="biophysicochemical properties">
    <phDependence>
        <text evidence="7">Active at neutral to pH 8 with casein as substrate.</text>
    </phDependence>
</comment>
<comment type="subcellular location">
    <subcellularLocation>
        <location evidence="7 8 10">Secreted</location>
    </subcellularLocation>
</comment>
<comment type="allergen">
    <text evidence="6 7 8 9 10">Causes an allergic reaction in human. Binds to IgE of patients suffering from bronchial asthma (PubMed:10231324, PubMed:11893850, PubMed:12602675, PubMed:15663570). Binds to IgE in 17% of the 212 asthmatic patients of different age (3 to 94 years old). The binding frequency and intensity to IgE increases significantly with age. Also binds to IgG and IgG4 (PubMed:12602675). Induces histamine release from basophils of asthmatic patients (PubMed:11893850). May contribute to asthma by damaging the barrier formed by the airway epithelium by cleaving the tight junction protein OCLN and stimulating the release of mediators, such as PGE2, CXCL8 and TGFB1, in human respiratory epithelial cells (PubMed:16436150).</text>
</comment>
<comment type="similarity">
    <text evidence="2 12">Belongs to the peptidase S8 family.</text>
</comment>
<dbReference type="EC" id="3.4.21.-" evidence="7 10"/>
<dbReference type="EMBL" id="AF321100">
    <property type="protein sequence ID" value="AAM33821.1"/>
    <property type="molecule type" value="mRNA"/>
</dbReference>
<dbReference type="RefSeq" id="XP_002568432.1">
    <property type="nucleotide sequence ID" value="XM_002568386.1"/>
</dbReference>
<dbReference type="SMR" id="P9WEW3"/>
<dbReference type="GeneID" id="8308402"/>
<dbReference type="OMA" id="INAPDVW"/>
<dbReference type="GO" id="GO:0005615">
    <property type="term" value="C:extracellular space"/>
    <property type="evidence" value="ECO:0000314"/>
    <property type="project" value="UniProtKB"/>
</dbReference>
<dbReference type="GO" id="GO:0019863">
    <property type="term" value="F:IgE binding"/>
    <property type="evidence" value="ECO:0007669"/>
    <property type="project" value="UniProtKB-KW"/>
</dbReference>
<dbReference type="GO" id="GO:0004252">
    <property type="term" value="F:serine-type endopeptidase activity"/>
    <property type="evidence" value="ECO:0000314"/>
    <property type="project" value="UniProtKB"/>
</dbReference>
<dbReference type="GO" id="GO:0006508">
    <property type="term" value="P:proteolysis"/>
    <property type="evidence" value="ECO:0000314"/>
    <property type="project" value="UniProtKB"/>
</dbReference>
<dbReference type="CDD" id="cd04077">
    <property type="entry name" value="Peptidases_S8_PCSK9_ProteinaseK_like"/>
    <property type="match status" value="1"/>
</dbReference>
<dbReference type="FunFam" id="3.40.50.200:FF:000014">
    <property type="entry name" value="Proteinase K"/>
    <property type="match status" value="1"/>
</dbReference>
<dbReference type="Gene3D" id="3.30.70.80">
    <property type="entry name" value="Peptidase S8 propeptide/proteinase inhibitor I9"/>
    <property type="match status" value="1"/>
</dbReference>
<dbReference type="Gene3D" id="3.40.50.200">
    <property type="entry name" value="Peptidase S8/S53 domain"/>
    <property type="match status" value="1"/>
</dbReference>
<dbReference type="InterPro" id="IPR034193">
    <property type="entry name" value="PCSK9_ProteinaseK-like"/>
</dbReference>
<dbReference type="InterPro" id="IPR000209">
    <property type="entry name" value="Peptidase_S8/S53_dom"/>
</dbReference>
<dbReference type="InterPro" id="IPR036852">
    <property type="entry name" value="Peptidase_S8/S53_dom_sf"/>
</dbReference>
<dbReference type="InterPro" id="IPR023828">
    <property type="entry name" value="Peptidase_S8_Ser-AS"/>
</dbReference>
<dbReference type="InterPro" id="IPR050131">
    <property type="entry name" value="Peptidase_S8_subtilisin-like"/>
</dbReference>
<dbReference type="InterPro" id="IPR015500">
    <property type="entry name" value="Peptidase_S8_subtilisin-rel"/>
</dbReference>
<dbReference type="InterPro" id="IPR010259">
    <property type="entry name" value="S8pro/Inhibitor_I9"/>
</dbReference>
<dbReference type="InterPro" id="IPR037045">
    <property type="entry name" value="S8pro/Inhibitor_I9_sf"/>
</dbReference>
<dbReference type="PANTHER" id="PTHR43806:SF58">
    <property type="entry name" value="ALKALINE PROTEASE 1-RELATED"/>
    <property type="match status" value="1"/>
</dbReference>
<dbReference type="PANTHER" id="PTHR43806">
    <property type="entry name" value="PEPTIDASE S8"/>
    <property type="match status" value="1"/>
</dbReference>
<dbReference type="Pfam" id="PF05922">
    <property type="entry name" value="Inhibitor_I9"/>
    <property type="match status" value="1"/>
</dbReference>
<dbReference type="Pfam" id="PF00082">
    <property type="entry name" value="Peptidase_S8"/>
    <property type="match status" value="1"/>
</dbReference>
<dbReference type="PRINTS" id="PR00723">
    <property type="entry name" value="SUBTILISIN"/>
</dbReference>
<dbReference type="SUPFAM" id="SSF54897">
    <property type="entry name" value="Protease propeptides/inhibitors"/>
    <property type="match status" value="1"/>
</dbReference>
<dbReference type="SUPFAM" id="SSF52743">
    <property type="entry name" value="Subtilisin-like"/>
    <property type="match status" value="1"/>
</dbReference>
<dbReference type="PROSITE" id="PS51892">
    <property type="entry name" value="SUBTILASE"/>
    <property type="match status" value="1"/>
</dbReference>
<dbReference type="PROSITE" id="PS00138">
    <property type="entry name" value="SUBTILASE_SER"/>
    <property type="match status" value="1"/>
</dbReference>
<protein>
    <recommendedName>
        <fullName evidence="12">Subtilisin-like serine protease Pen ch 13</fullName>
        <ecNumber evidence="7 10">3.4.21.-</ecNumber>
    </recommendedName>
    <alternativeName>
        <fullName evidence="11">Alkaline serine protease</fullName>
    </alternativeName>
    <allergenName evidence="11">Pen ch 13</allergenName>
</protein>
<accession>P9WEW3</accession>
<accession>Q8NKG0</accession>
<evidence type="ECO:0000250" key="1">
    <source>
        <dbReference type="UniProtKB" id="Q5JIZ5"/>
    </source>
</evidence>
<evidence type="ECO:0000255" key="2"/>
<evidence type="ECO:0000255" key="3">
    <source>
        <dbReference type="PROSITE-ProRule" id="PRU00498"/>
    </source>
</evidence>
<evidence type="ECO:0000255" key="4">
    <source>
        <dbReference type="PROSITE-ProRule" id="PRU01240"/>
    </source>
</evidence>
<evidence type="ECO:0000256" key="5">
    <source>
        <dbReference type="SAM" id="MobiDB-lite"/>
    </source>
</evidence>
<evidence type="ECO:0000269" key="6">
    <source>
    </source>
</evidence>
<evidence type="ECO:0000269" key="7">
    <source>
    </source>
</evidence>
<evidence type="ECO:0000269" key="8">
    <source>
    </source>
</evidence>
<evidence type="ECO:0000269" key="9">
    <source>
    </source>
</evidence>
<evidence type="ECO:0000269" key="10">
    <source>
    </source>
</evidence>
<evidence type="ECO:0000303" key="11">
    <source>
    </source>
</evidence>
<evidence type="ECO:0000305" key="12"/>
<evidence type="ECO:0000305" key="13">
    <source>
    </source>
</evidence>
<evidence type="ECO:0000305" key="14">
    <source>
    </source>
</evidence>
<evidence type="ECO:0000305" key="15">
    <source>
    </source>
</evidence>
<feature type="signal peptide" evidence="2">
    <location>
        <begin position="1"/>
        <end position="19"/>
    </location>
</feature>
<feature type="propeptide" id="PRO_0000446677" description="Removed in mature form" evidence="2 13 14 15">
    <location>
        <begin position="20"/>
        <end position="115"/>
    </location>
</feature>
<feature type="chain" id="PRO_5004312984" description="Subtilisin-like serine protease Pen ch 13" evidence="13 14 15">
    <location>
        <begin position="116"/>
        <end position="398"/>
    </location>
</feature>
<feature type="domain" description="Inhibitor I9" evidence="2">
    <location>
        <begin position="35"/>
        <end position="113"/>
    </location>
</feature>
<feature type="domain" description="Peptidase S8" evidence="4">
    <location>
        <begin position="125"/>
        <end position="398"/>
    </location>
</feature>
<feature type="region of interest" description="IgE-binding" evidence="9">
    <location>
        <begin position="124"/>
        <end position="134"/>
    </location>
</feature>
<feature type="region of interest" description="IgE-binding" evidence="9">
    <location>
        <begin position="163"/>
        <end position="170"/>
    </location>
</feature>
<feature type="region of interest" description="Disordered" evidence="5">
    <location>
        <begin position="175"/>
        <end position="195"/>
    </location>
</feature>
<feature type="region of interest" description="IgE-binding" evidence="9">
    <location>
        <begin position="227"/>
        <end position="245"/>
    </location>
</feature>
<feature type="region of interest" description="IgE-binding" evidence="9">
    <location>
        <begin position="310"/>
        <end position="318"/>
    </location>
</feature>
<feature type="active site" description="Charge relay system" evidence="4">
    <location>
        <position position="157"/>
    </location>
</feature>
<feature type="active site" description="Charge relay system" evidence="4">
    <location>
        <position position="188"/>
    </location>
</feature>
<feature type="active site" description="Charge relay system" evidence="4">
    <location>
        <position position="343"/>
    </location>
</feature>
<feature type="site" description="Important for catalytic activity" evidence="1">
    <location>
        <position position="280"/>
    </location>
</feature>
<feature type="glycosylation site" description="N-linked (GlcNAc...) asparagine" evidence="3">
    <location>
        <position position="113"/>
    </location>
</feature>
<feature type="glycosylation site" description="N-linked (GlcNAc...) asparagine" evidence="3">
    <location>
        <position position="249"/>
    </location>
</feature>
<feature type="mutagenesis site" description="Reduced IgE-binding. Significantly reduced IgE-binding; when associated with M-167." evidence="9">
    <original>H</original>
    <variation>M</variation>
    <location>
        <position position="164"/>
    </location>
</feature>
<feature type="mutagenesis site" description="Reduced IgE-binding. Significantly reduced IgE-binding; when associated with M-164." evidence="9">
    <original>F</original>
    <variation>M</variation>
    <location>
        <position position="167"/>
    </location>
</feature>
<feature type="mutagenesis site" description="Reduced IgE-binding." evidence="9">
    <original>VDLY</original>
    <variation>AAL</variation>
    <location>
        <begin position="318"/>
        <end position="321"/>
    </location>
</feature>
<sequence length="398" mass="40362">MGFLKLLSTSLATLAVVNAGKLLTANDGDEVVPSSYIVVMNDGVSTAQFETHRNWAANVHARTRSLKGGESGPGKHFDINGMKGYSASFDDRTVKDIASDPTVKYVEPDMVVNATANVVQRNAPSWGLSRISSKKSGATDYVYDSTAGEGIVIYGVDTGIDIGHADFGGRAEWGTNTADNDDTDGNGHGTHTASTAAGSKFGVAKKASVVAVKVLGADGSGTNSQVIAGMDWAVKDSKSRGATGKSVMNMSLGGAYSRAMNDAAANVVRSGVFLSVAAGNEAQDASNSSPASAPNVCTIAASTNSDGSASFTNFGSVVDLYAPGKDITAAYPGGGSKTLSGTSMAAPHVAGAAAYLMALEGVTSDKACARIVELAISSISSAPSGTTSKLLYNGINAQ</sequence>
<organism>
    <name type="scientific">Penicillium rubens</name>
    <dbReference type="NCBI Taxonomy" id="1108849"/>
    <lineage>
        <taxon>Eukaryota</taxon>
        <taxon>Fungi</taxon>
        <taxon>Dikarya</taxon>
        <taxon>Ascomycota</taxon>
        <taxon>Pezizomycotina</taxon>
        <taxon>Eurotiomycetes</taxon>
        <taxon>Eurotiomycetidae</taxon>
        <taxon>Eurotiales</taxon>
        <taxon>Aspergillaceae</taxon>
        <taxon>Penicillium</taxon>
        <taxon>Penicillium chrysogenum species complex</taxon>
    </lineage>
</organism>
<proteinExistence type="evidence at protein level"/>
<name>PCH13_PENRB</name>
<reference key="1">
    <citation type="journal article" date="2002" name="Int. Arch. Allergy Immunol.">
        <title>cDNA cloning, biological and immunological characterization of the alkaline serine protease major allergen from Penicillium chrysogenum.</title>
        <authorList>
            <person name="Chou H."/>
            <person name="Lai H.Y."/>
            <person name="Tam M.F."/>
            <person name="Chou M.Y."/>
            <person name="Wang S.R."/>
            <person name="Han S.H."/>
            <person name="Shen H.D."/>
        </authorList>
    </citation>
    <scope>NUCLEOTIDE SEQUENCE [MRNA]</scope>
    <scope>PROTEIN SEQUENCE OF 116-125; 137-168 AND 282-291</scope>
    <scope>FUNCTION</scope>
    <scope>CATALYTIC ACTIVITY</scope>
    <scope>ACTIVITY REGULATION</scope>
    <scope>BIOPHYSICOCHEMICAL PROPERTIES</scope>
    <scope>SUBCELLULAR LOCATION</scope>
    <scope>ALLERGEN</scope>
    <source>
        <strain>ATCC 9179 / BCRC 30568 / CBS 197.46 / NRRL 832 / QM 940</strain>
    </source>
</reference>
<reference key="2">
    <citation type="journal article" date="1999" name="Clin. Exp. Allergy">
        <title>Characterization of allergens from Penicillium oxalicum and P. notatum by immunoblotting and N-terminal amino acid sequence analysis.</title>
        <authorList>
            <person name="Shen H.D."/>
            <person name="Lin W.L."/>
            <person name="Tam M.F."/>
            <person name="Wang S.R."/>
            <person name="Tzean S.S."/>
            <person name="Huang M.H."/>
            <person name="Han S.H."/>
        </authorList>
    </citation>
    <scope>PROTEIN SEQUENCE OF 116-125</scope>
    <scope>ALLERGEN</scope>
    <source>
        <strain>ATCC 9179 / BCRC 30568 / CBS 197.46 / NRRL 832 / QM 940</strain>
    </source>
</reference>
<reference key="3">
    <citation type="journal article" date="2003" name="Ann. Allergy Asthma Immunol.">
        <title>The prevalence of IgE antibody reactivity against the alkaline serine protease major allergen of Penicillium chrysogenum increases with the age of asthmatic patients.</title>
        <authorList>
            <person name="Chou H."/>
            <person name="Chang C.Y."/>
            <person name="Tsai J.J."/>
            <person name="Tang R.B."/>
            <person name="Lee S.S."/>
            <person name="Wang S.R."/>
            <person name="Peng H.J."/>
            <person name="Shen H.D."/>
        </authorList>
    </citation>
    <scope>PROTEIN SEQUENCE OF 116-125</scope>
    <scope>SUBCELLULAR LOCATION</scope>
    <scope>ALLERGEN</scope>
    <source>
        <strain>ATCC 9179 / BCRC 30568 / CBS 197.46 / NRRL 832 / QM 940</strain>
    </source>
</reference>
<reference key="4">
    <citation type="journal article" date="2004" name="Clin. Exp. Allergy">
        <title>Molecular and structural analysis of immunoglobulin E-binding epitopes of Pen ch 13, an alkaline serine protease major allergen from Penicillium chrysogenum.</title>
        <authorList>
            <person name="Lai H.Y."/>
            <person name="Tam M.F."/>
            <person name="Chou H."/>
            <person name="Lee S.S."/>
            <person name="Tai H.Y."/>
            <person name="Shen H.D."/>
        </authorList>
    </citation>
    <scope>ALLERGEN</scope>
    <scope>IGE-BINDING REGIONS</scope>
    <scope>MUTAGENESIS OF HIS-164; PHE-167 AND 318-VAL--TYR-321</scope>
    <source>
        <strain>ATCC 9179 / BCRC 30568 / CBS 197.46 / NRRL 832 / QM 940</strain>
    </source>
</reference>
<reference key="5">
    <citation type="journal article" date="2006" name="Allergy">
        <title>Pen ch 13 allergen induces secretion of mediators and degradation of occludin protein of human lung epithelial cells.</title>
        <authorList>
            <person name="Tai H.Y."/>
            <person name="Tam M.F."/>
            <person name="Chou H."/>
            <person name="Peng H.J."/>
            <person name="Su S.N."/>
            <person name="Perng D.W."/>
            <person name="Shen H.D."/>
        </authorList>
    </citation>
    <scope>FUNCTION</scope>
    <scope>CATALYTIC ACTIVITY</scope>
    <scope>SUBCELLULAR LOCATION</scope>
    <scope>ALLERGEN</scope>
    <source>
        <strain>ATCC 9179 / BCRC 30568 / CBS 197.46 / NRRL 832 / QM 940</strain>
    </source>
</reference>
<keyword id="KW-0020">Allergen</keyword>
<keyword id="KW-0903">Direct protein sequencing</keyword>
<keyword id="KW-0325">Glycoprotein</keyword>
<keyword id="KW-0378">Hydrolase</keyword>
<keyword id="KW-0389">IgE-binding protein</keyword>
<keyword id="KW-0645">Protease</keyword>
<keyword id="KW-0964">Secreted</keyword>
<keyword id="KW-0720">Serine protease</keyword>
<keyword id="KW-0732">Signal</keyword>
<keyword id="KW-0865">Zymogen</keyword>